<organism>
    <name type="scientific">Streptococcus agalactiae serotype Ia (strain ATCC 27591 / A909 / CDC SS700)</name>
    <dbReference type="NCBI Taxonomy" id="205921"/>
    <lineage>
        <taxon>Bacteria</taxon>
        <taxon>Bacillati</taxon>
        <taxon>Bacillota</taxon>
        <taxon>Bacilli</taxon>
        <taxon>Lactobacillales</taxon>
        <taxon>Streptococcaceae</taxon>
        <taxon>Streptococcus</taxon>
    </lineage>
</organism>
<sequence>MDIKSEVLAIIDDLFMEDVSSMMDEDLFDAGVLDSMGTVELIVELESHFNIDIPIAEFGRNDWNTANKIVAGVTELCNA</sequence>
<keyword id="KW-0961">Cell wall biogenesis/degradation</keyword>
<keyword id="KW-0963">Cytoplasm</keyword>
<keyword id="KW-0596">Phosphopantetheine</keyword>
<keyword id="KW-0597">Phosphoprotein</keyword>
<gene>
    <name evidence="1" type="primary">dltC</name>
    <name type="ordered locus">SAK_1810</name>
</gene>
<proteinExistence type="inferred from homology"/>
<reference key="1">
    <citation type="journal article" date="2005" name="Proc. Natl. Acad. Sci. U.S.A.">
        <title>Genome analysis of multiple pathogenic isolates of Streptococcus agalactiae: implications for the microbial 'pan-genome'.</title>
        <authorList>
            <person name="Tettelin H."/>
            <person name="Masignani V."/>
            <person name="Cieslewicz M.J."/>
            <person name="Donati C."/>
            <person name="Medini D."/>
            <person name="Ward N.L."/>
            <person name="Angiuoli S.V."/>
            <person name="Crabtree J."/>
            <person name="Jones A.L."/>
            <person name="Durkin A.S."/>
            <person name="DeBoy R.T."/>
            <person name="Davidsen T.M."/>
            <person name="Mora M."/>
            <person name="Scarselli M."/>
            <person name="Margarit y Ros I."/>
            <person name="Peterson J.D."/>
            <person name="Hauser C.R."/>
            <person name="Sundaram J.P."/>
            <person name="Nelson W.C."/>
            <person name="Madupu R."/>
            <person name="Brinkac L.M."/>
            <person name="Dodson R.J."/>
            <person name="Rosovitz M.J."/>
            <person name="Sullivan S.A."/>
            <person name="Daugherty S.C."/>
            <person name="Haft D.H."/>
            <person name="Selengut J."/>
            <person name="Gwinn M.L."/>
            <person name="Zhou L."/>
            <person name="Zafar N."/>
            <person name="Khouri H."/>
            <person name="Radune D."/>
            <person name="Dimitrov G."/>
            <person name="Watkins K."/>
            <person name="O'Connor K.J."/>
            <person name="Smith S."/>
            <person name="Utterback T.R."/>
            <person name="White O."/>
            <person name="Rubens C.E."/>
            <person name="Grandi G."/>
            <person name="Madoff L.C."/>
            <person name="Kasper D.L."/>
            <person name="Telford J.L."/>
            <person name="Wessels M.R."/>
            <person name="Rappuoli R."/>
            <person name="Fraser C.M."/>
        </authorList>
    </citation>
    <scope>NUCLEOTIDE SEQUENCE [LARGE SCALE GENOMIC DNA]</scope>
    <source>
        <strain>ATCC 27591 / A909 / CDC SS700</strain>
    </source>
</reference>
<feature type="chain" id="PRO_1000024926" description="D-alanyl carrier protein">
    <location>
        <begin position="1"/>
        <end position="79"/>
    </location>
</feature>
<feature type="domain" description="Carrier" evidence="1">
    <location>
        <begin position="1"/>
        <end position="77"/>
    </location>
</feature>
<feature type="modified residue" description="O-(pantetheine 4'-phosphoryl)serine" evidence="1">
    <location>
        <position position="35"/>
    </location>
</feature>
<dbReference type="EMBL" id="CP000114">
    <property type="protein sequence ID" value="ABA45800.1"/>
    <property type="molecule type" value="Genomic_DNA"/>
</dbReference>
<dbReference type="RefSeq" id="WP_000351975.1">
    <property type="nucleotide sequence ID" value="NC_007432.1"/>
</dbReference>
<dbReference type="SMR" id="Q3JZ96"/>
<dbReference type="GeneID" id="66886626"/>
<dbReference type="KEGG" id="sak:SAK_1810"/>
<dbReference type="HOGENOM" id="CLU_108696_19_0_9"/>
<dbReference type="UniPathway" id="UPA00556"/>
<dbReference type="GO" id="GO:0005737">
    <property type="term" value="C:cytoplasm"/>
    <property type="evidence" value="ECO:0007669"/>
    <property type="project" value="UniProtKB-SubCell"/>
</dbReference>
<dbReference type="GO" id="GO:0036370">
    <property type="term" value="F:D-alanyl carrier activity"/>
    <property type="evidence" value="ECO:0007669"/>
    <property type="project" value="UniProtKB-UniRule"/>
</dbReference>
<dbReference type="GO" id="GO:0071555">
    <property type="term" value="P:cell wall organization"/>
    <property type="evidence" value="ECO:0007669"/>
    <property type="project" value="UniProtKB-KW"/>
</dbReference>
<dbReference type="GO" id="GO:0070395">
    <property type="term" value="P:lipoteichoic acid biosynthetic process"/>
    <property type="evidence" value="ECO:0007669"/>
    <property type="project" value="UniProtKB-UniRule"/>
</dbReference>
<dbReference type="Gene3D" id="1.10.1200.10">
    <property type="entry name" value="ACP-like"/>
    <property type="match status" value="1"/>
</dbReference>
<dbReference type="HAMAP" id="MF_00565">
    <property type="entry name" value="DltC"/>
    <property type="match status" value="1"/>
</dbReference>
<dbReference type="InterPro" id="IPR036736">
    <property type="entry name" value="ACP-like_sf"/>
</dbReference>
<dbReference type="InterPro" id="IPR003230">
    <property type="entry name" value="DltC"/>
</dbReference>
<dbReference type="InterPro" id="IPR009081">
    <property type="entry name" value="PP-bd_ACP"/>
</dbReference>
<dbReference type="NCBIfam" id="TIGR01688">
    <property type="entry name" value="dltC"/>
    <property type="match status" value="1"/>
</dbReference>
<dbReference type="NCBIfam" id="NF003464">
    <property type="entry name" value="PRK05087.1"/>
    <property type="match status" value="1"/>
</dbReference>
<dbReference type="Pfam" id="PF00550">
    <property type="entry name" value="PP-binding"/>
    <property type="match status" value="1"/>
</dbReference>
<dbReference type="SUPFAM" id="SSF47336">
    <property type="entry name" value="ACP-like"/>
    <property type="match status" value="1"/>
</dbReference>
<dbReference type="PROSITE" id="PS50075">
    <property type="entry name" value="CARRIER"/>
    <property type="match status" value="1"/>
</dbReference>
<evidence type="ECO:0000255" key="1">
    <source>
        <dbReference type="HAMAP-Rule" id="MF_00565"/>
    </source>
</evidence>
<accession>Q3JZ96</accession>
<comment type="function">
    <text evidence="1">Carrier protein involved in the D-alanylation of lipoteichoic acid (LTA). The loading of thioester-linked D-alanine onto DltC is catalyzed by D-alanine--D-alanyl carrier protein ligase DltA. The DltC-carried D-alanyl group is further transferred to cell membrane phosphatidylglycerol (PG) by forming an ester bond, probably catalyzed by DltD. D-alanylation of LTA plays an important role in modulating the properties of the cell wall in Gram-positive bacteria, influencing the net charge of the cell wall.</text>
</comment>
<comment type="pathway">
    <text evidence="1">Cell wall biogenesis; lipoteichoic acid biosynthesis.</text>
</comment>
<comment type="subcellular location">
    <subcellularLocation>
        <location evidence="1">Cytoplasm</location>
    </subcellularLocation>
</comment>
<comment type="PTM">
    <text evidence="1">4'-phosphopantetheine is transferred from CoA to a specific serine of apo-DCP.</text>
</comment>
<comment type="similarity">
    <text evidence="1">Belongs to the DltC family.</text>
</comment>
<protein>
    <recommendedName>
        <fullName evidence="1">D-alanyl carrier protein</fullName>
        <shortName evidence="1">DCP</shortName>
    </recommendedName>
    <alternativeName>
        <fullName evidence="1">D-alanine--poly(phosphoribitol) ligase subunit 2</fullName>
    </alternativeName>
</protein>
<name>DLTC_STRA1</name>